<reference key="1">
    <citation type="submission" date="2008-08" db="EMBL/GenBank/DDBJ databases">
        <title>Complete sequence of Vibrio fischeri strain MJ11.</title>
        <authorList>
            <person name="Mandel M.J."/>
            <person name="Stabb E.V."/>
            <person name="Ruby E.G."/>
            <person name="Ferriera S."/>
            <person name="Johnson J."/>
            <person name="Kravitz S."/>
            <person name="Beeson K."/>
            <person name="Sutton G."/>
            <person name="Rogers Y.-H."/>
            <person name="Friedman R."/>
            <person name="Frazier M."/>
            <person name="Venter J.C."/>
        </authorList>
    </citation>
    <scope>NUCLEOTIDE SEQUENCE [LARGE SCALE GENOMIC DNA]</scope>
    <source>
        <strain>MJ11</strain>
    </source>
</reference>
<keyword id="KW-0414">Isoprene biosynthesis</keyword>
<keyword id="KW-0548">Nucleotidyltransferase</keyword>
<keyword id="KW-0808">Transferase</keyword>
<sequence length="238" mass="26433">MALTTPLSITAIVPAAGVGSRMKADRPKQYLLLNGKTVLEHTIEQLLAFPLVNKVVVAITDGDPYFPELTLAQDNRVIRVSGGKERADSVLSGLSYVQEHQLSEWVMVHDAARPCVRHSDIDKLITEVIPEHIGGILASPVRDTMKQATQEQCIETTIDRSVLWHALTPQLFTTELLYSALQTGLDKNLSITDESSAIELMGYQPKLVQGRADNLKITQPEDLDLAEFYLQKMKKETK</sequence>
<name>ISPD_ALIFM</name>
<proteinExistence type="inferred from homology"/>
<dbReference type="EC" id="2.7.7.60" evidence="1"/>
<dbReference type="EMBL" id="CP001139">
    <property type="protein sequence ID" value="ACH65613.1"/>
    <property type="molecule type" value="Genomic_DNA"/>
</dbReference>
<dbReference type="RefSeq" id="WP_012533172.1">
    <property type="nucleotide sequence ID" value="NC_011184.1"/>
</dbReference>
<dbReference type="SMR" id="B5FAF7"/>
<dbReference type="KEGG" id="vfm:VFMJ11_2179"/>
<dbReference type="HOGENOM" id="CLU_061281_3_1_6"/>
<dbReference type="UniPathway" id="UPA00056">
    <property type="reaction ID" value="UER00093"/>
</dbReference>
<dbReference type="Proteomes" id="UP000001857">
    <property type="component" value="Chromosome I"/>
</dbReference>
<dbReference type="GO" id="GO:0050518">
    <property type="term" value="F:2-C-methyl-D-erythritol 4-phosphate cytidylyltransferase activity"/>
    <property type="evidence" value="ECO:0007669"/>
    <property type="project" value="UniProtKB-UniRule"/>
</dbReference>
<dbReference type="GO" id="GO:0019288">
    <property type="term" value="P:isopentenyl diphosphate biosynthetic process, methylerythritol 4-phosphate pathway"/>
    <property type="evidence" value="ECO:0007669"/>
    <property type="project" value="UniProtKB-UniRule"/>
</dbReference>
<dbReference type="CDD" id="cd02516">
    <property type="entry name" value="CDP-ME_synthetase"/>
    <property type="match status" value="1"/>
</dbReference>
<dbReference type="FunFam" id="3.90.550.10:FF:000003">
    <property type="entry name" value="2-C-methyl-D-erythritol 4-phosphate cytidylyltransferase"/>
    <property type="match status" value="1"/>
</dbReference>
<dbReference type="Gene3D" id="3.90.550.10">
    <property type="entry name" value="Spore Coat Polysaccharide Biosynthesis Protein SpsA, Chain A"/>
    <property type="match status" value="1"/>
</dbReference>
<dbReference type="HAMAP" id="MF_00108">
    <property type="entry name" value="IspD"/>
    <property type="match status" value="1"/>
</dbReference>
<dbReference type="InterPro" id="IPR001228">
    <property type="entry name" value="IspD"/>
</dbReference>
<dbReference type="InterPro" id="IPR034683">
    <property type="entry name" value="IspD/TarI"/>
</dbReference>
<dbReference type="InterPro" id="IPR050088">
    <property type="entry name" value="IspD/TarI_cytidylyltransf_bact"/>
</dbReference>
<dbReference type="InterPro" id="IPR018294">
    <property type="entry name" value="ISPD_synthase_CS"/>
</dbReference>
<dbReference type="InterPro" id="IPR029044">
    <property type="entry name" value="Nucleotide-diphossugar_trans"/>
</dbReference>
<dbReference type="NCBIfam" id="TIGR00453">
    <property type="entry name" value="ispD"/>
    <property type="match status" value="1"/>
</dbReference>
<dbReference type="PANTHER" id="PTHR32125">
    <property type="entry name" value="2-C-METHYL-D-ERYTHRITOL 4-PHOSPHATE CYTIDYLYLTRANSFERASE, CHLOROPLASTIC"/>
    <property type="match status" value="1"/>
</dbReference>
<dbReference type="PANTHER" id="PTHR32125:SF4">
    <property type="entry name" value="2-C-METHYL-D-ERYTHRITOL 4-PHOSPHATE CYTIDYLYLTRANSFERASE, CHLOROPLASTIC"/>
    <property type="match status" value="1"/>
</dbReference>
<dbReference type="Pfam" id="PF01128">
    <property type="entry name" value="IspD"/>
    <property type="match status" value="1"/>
</dbReference>
<dbReference type="SUPFAM" id="SSF53448">
    <property type="entry name" value="Nucleotide-diphospho-sugar transferases"/>
    <property type="match status" value="1"/>
</dbReference>
<dbReference type="PROSITE" id="PS01295">
    <property type="entry name" value="ISPD"/>
    <property type="match status" value="1"/>
</dbReference>
<evidence type="ECO:0000255" key="1">
    <source>
        <dbReference type="HAMAP-Rule" id="MF_00108"/>
    </source>
</evidence>
<organism>
    <name type="scientific">Aliivibrio fischeri (strain MJ11)</name>
    <name type="common">Vibrio fischeri</name>
    <dbReference type="NCBI Taxonomy" id="388396"/>
    <lineage>
        <taxon>Bacteria</taxon>
        <taxon>Pseudomonadati</taxon>
        <taxon>Pseudomonadota</taxon>
        <taxon>Gammaproteobacteria</taxon>
        <taxon>Vibrionales</taxon>
        <taxon>Vibrionaceae</taxon>
        <taxon>Aliivibrio</taxon>
    </lineage>
</organism>
<comment type="function">
    <text evidence="1">Catalyzes the formation of 4-diphosphocytidyl-2-C-methyl-D-erythritol from CTP and 2-C-methyl-D-erythritol 4-phosphate (MEP).</text>
</comment>
<comment type="catalytic activity">
    <reaction evidence="1">
        <text>2-C-methyl-D-erythritol 4-phosphate + CTP + H(+) = 4-CDP-2-C-methyl-D-erythritol + diphosphate</text>
        <dbReference type="Rhea" id="RHEA:13429"/>
        <dbReference type="ChEBI" id="CHEBI:15378"/>
        <dbReference type="ChEBI" id="CHEBI:33019"/>
        <dbReference type="ChEBI" id="CHEBI:37563"/>
        <dbReference type="ChEBI" id="CHEBI:57823"/>
        <dbReference type="ChEBI" id="CHEBI:58262"/>
        <dbReference type="EC" id="2.7.7.60"/>
    </reaction>
</comment>
<comment type="pathway">
    <text evidence="1">Isoprenoid biosynthesis; isopentenyl diphosphate biosynthesis via DXP pathway; isopentenyl diphosphate from 1-deoxy-D-xylulose 5-phosphate: step 2/6.</text>
</comment>
<comment type="similarity">
    <text evidence="1">Belongs to the IspD/TarI cytidylyltransferase family. IspD subfamily.</text>
</comment>
<gene>
    <name evidence="1" type="primary">ispD</name>
    <name type="ordered locus">VFMJ11_2179</name>
</gene>
<protein>
    <recommendedName>
        <fullName evidence="1">2-C-methyl-D-erythritol 4-phosphate cytidylyltransferase</fullName>
        <ecNumber evidence="1">2.7.7.60</ecNumber>
    </recommendedName>
    <alternativeName>
        <fullName evidence="1">4-diphosphocytidyl-2C-methyl-D-erythritol synthase</fullName>
    </alternativeName>
    <alternativeName>
        <fullName evidence="1">MEP cytidylyltransferase</fullName>
        <shortName evidence="1">MCT</shortName>
    </alternativeName>
</protein>
<feature type="chain" id="PRO_1000094358" description="2-C-methyl-D-erythritol 4-phosphate cytidylyltransferase">
    <location>
        <begin position="1"/>
        <end position="238"/>
    </location>
</feature>
<feature type="site" description="Transition state stabilizer" evidence="1">
    <location>
        <position position="21"/>
    </location>
</feature>
<feature type="site" description="Transition state stabilizer" evidence="1">
    <location>
        <position position="28"/>
    </location>
</feature>
<feature type="site" description="Positions MEP for the nucleophilic attack" evidence="1">
    <location>
        <position position="160"/>
    </location>
</feature>
<feature type="site" description="Positions MEP for the nucleophilic attack" evidence="1">
    <location>
        <position position="216"/>
    </location>
</feature>
<accession>B5FAF7</accession>